<organism>
    <name type="scientific">Homo sapiens</name>
    <name type="common">Human</name>
    <dbReference type="NCBI Taxonomy" id="9606"/>
    <lineage>
        <taxon>Eukaryota</taxon>
        <taxon>Metazoa</taxon>
        <taxon>Chordata</taxon>
        <taxon>Craniata</taxon>
        <taxon>Vertebrata</taxon>
        <taxon>Euteleostomi</taxon>
        <taxon>Mammalia</taxon>
        <taxon>Eutheria</taxon>
        <taxon>Euarchontoglires</taxon>
        <taxon>Primates</taxon>
        <taxon>Haplorrhini</taxon>
        <taxon>Catarrhini</taxon>
        <taxon>Hominidae</taxon>
        <taxon>Homo</taxon>
    </lineage>
</organism>
<protein>
    <recommendedName>
        <fullName evidence="1">D-aminoacyl-tRNA deacylase 1</fullName>
        <shortName>DTD</shortName>
        <ecNumber evidence="1">3.1.1.96</ecNumber>
    </recommendedName>
    <alternativeName>
        <fullName evidence="8">DNA-unwinding element-binding protein B</fullName>
        <shortName evidence="8">DUE-B</shortName>
    </alternativeName>
    <alternativeName>
        <fullName evidence="1">Gly-tRNA(Ala) deacylase</fullName>
    </alternativeName>
    <alternativeName>
        <fullName>Histidyl-tRNA synthase-related</fullName>
    </alternativeName>
</protein>
<name>DTD1_HUMAN</name>
<dbReference type="EC" id="3.1.1.96" evidence="1"/>
<dbReference type="EMBL" id="AF332356">
    <property type="protein sequence ID" value="AAL57046.1"/>
    <property type="molecule type" value="mRNA"/>
</dbReference>
<dbReference type="EMBL" id="AK074304">
    <property type="protein sequence ID" value="BAB85044.1"/>
    <property type="status" value="ALT_SEQ"/>
    <property type="molecule type" value="mRNA"/>
</dbReference>
<dbReference type="EMBL" id="AK291440">
    <property type="protein sequence ID" value="BAF84129.1"/>
    <property type="molecule type" value="mRNA"/>
</dbReference>
<dbReference type="EMBL" id="AL121900">
    <property type="status" value="NOT_ANNOTATED_CDS"/>
    <property type="molecule type" value="Genomic_DNA"/>
</dbReference>
<dbReference type="EMBL" id="AL121780">
    <property type="status" value="NOT_ANNOTATED_CDS"/>
    <property type="molecule type" value="Genomic_DNA"/>
</dbReference>
<dbReference type="EMBL" id="CH471133">
    <property type="protein sequence ID" value="EAX10227.1"/>
    <property type="molecule type" value="Genomic_DNA"/>
</dbReference>
<dbReference type="EMBL" id="BC000599">
    <property type="status" value="NOT_ANNOTATED_CDS"/>
    <property type="molecule type" value="mRNA"/>
</dbReference>
<dbReference type="EMBL" id="CH471133">
    <property type="protein sequence ID" value="EAX10228.1"/>
    <property type="molecule type" value="Genomic_DNA"/>
</dbReference>
<dbReference type="EMBL" id="BC045167">
    <property type="protein sequence ID" value="AAH45167.1"/>
    <property type="molecule type" value="mRNA"/>
</dbReference>
<dbReference type="EMBL" id="BC100923">
    <property type="protein sequence ID" value="AAI00924.1"/>
    <property type="molecule type" value="mRNA"/>
</dbReference>
<dbReference type="EMBL" id="BC100924">
    <property type="protein sequence ID" value="AAI00925.1"/>
    <property type="molecule type" value="mRNA"/>
</dbReference>
<dbReference type="EMBL" id="BC100925">
    <property type="protein sequence ID" value="AAI00926.1"/>
    <property type="molecule type" value="mRNA"/>
</dbReference>
<dbReference type="CCDS" id="CCDS13138.1"/>
<dbReference type="RefSeq" id="NP_001304972.1">
    <property type="nucleotide sequence ID" value="NM_001318043.1"/>
</dbReference>
<dbReference type="RefSeq" id="NP_543010.3">
    <property type="nucleotide sequence ID" value="NM_080820.5"/>
</dbReference>
<dbReference type="PDB" id="2OKV">
    <property type="method" value="X-ray"/>
    <property type="resolution" value="2.00 A"/>
    <property type="chains" value="A/B/C/D=1-209"/>
</dbReference>
<dbReference type="PDBsum" id="2OKV"/>
<dbReference type="SMR" id="Q8TEA8"/>
<dbReference type="BioGRID" id="124965">
    <property type="interactions" value="30"/>
</dbReference>
<dbReference type="FunCoup" id="Q8TEA8">
    <property type="interactions" value="847"/>
</dbReference>
<dbReference type="IntAct" id="Q8TEA8">
    <property type="interactions" value="9"/>
</dbReference>
<dbReference type="MINT" id="Q8TEA8"/>
<dbReference type="STRING" id="9606.ENSP00000482916"/>
<dbReference type="GlyGen" id="Q8TEA8">
    <property type="glycosylation" value="1 site"/>
</dbReference>
<dbReference type="iPTMnet" id="Q8TEA8"/>
<dbReference type="PhosphoSitePlus" id="Q8TEA8"/>
<dbReference type="SwissPalm" id="Q8TEA8"/>
<dbReference type="BioMuta" id="DTD1"/>
<dbReference type="DMDM" id="29427856"/>
<dbReference type="jPOST" id="Q8TEA8"/>
<dbReference type="MassIVE" id="Q8TEA8"/>
<dbReference type="PaxDb" id="9606-ENSP00000366672"/>
<dbReference type="PeptideAtlas" id="Q8TEA8"/>
<dbReference type="ProteomicsDB" id="74433"/>
<dbReference type="Pumba" id="Q8TEA8"/>
<dbReference type="Antibodypedia" id="42815">
    <property type="antibodies" value="117 antibodies from 19 providers"/>
</dbReference>
<dbReference type="DNASU" id="92675"/>
<dbReference type="Ensembl" id="ENST00000377452.4">
    <property type="protein sequence ID" value="ENSP00000366672.4"/>
    <property type="gene ID" value="ENSG00000125821.13"/>
</dbReference>
<dbReference type="GeneID" id="92675"/>
<dbReference type="KEGG" id="hsa:92675"/>
<dbReference type="MANE-Select" id="ENST00000377452.4">
    <property type="protein sequence ID" value="ENSP00000366672.4"/>
    <property type="RefSeq nucleotide sequence ID" value="NM_080820.6"/>
    <property type="RefSeq protein sequence ID" value="NP_543010.3"/>
</dbReference>
<dbReference type="UCSC" id="uc002wrf.5">
    <property type="organism name" value="human"/>
</dbReference>
<dbReference type="AGR" id="HGNC:16219"/>
<dbReference type="CTD" id="92675"/>
<dbReference type="DisGeNET" id="92675"/>
<dbReference type="GeneCards" id="DTD1"/>
<dbReference type="HGNC" id="HGNC:16219">
    <property type="gene designation" value="DTD1"/>
</dbReference>
<dbReference type="HPA" id="ENSG00000125821">
    <property type="expression patterns" value="Low tissue specificity"/>
</dbReference>
<dbReference type="MIM" id="610996">
    <property type="type" value="gene"/>
</dbReference>
<dbReference type="neXtProt" id="NX_Q8TEA8"/>
<dbReference type="OpenTargets" id="ENSG00000125821"/>
<dbReference type="PharmGKB" id="PA162384107"/>
<dbReference type="VEuPathDB" id="HostDB:ENSG00000125821"/>
<dbReference type="eggNOG" id="KOG3323">
    <property type="taxonomic scope" value="Eukaryota"/>
</dbReference>
<dbReference type="GeneTree" id="ENSGT00940000153431"/>
<dbReference type="HOGENOM" id="CLU_076901_0_0_1"/>
<dbReference type="InParanoid" id="Q8TEA8"/>
<dbReference type="OMA" id="WPDENDK"/>
<dbReference type="OrthoDB" id="275783at2759"/>
<dbReference type="PAN-GO" id="Q8TEA8">
    <property type="GO annotations" value="3 GO annotations based on evolutionary models"/>
</dbReference>
<dbReference type="PhylomeDB" id="Q8TEA8"/>
<dbReference type="TreeFam" id="TF314886"/>
<dbReference type="PathwayCommons" id="Q8TEA8"/>
<dbReference type="SignaLink" id="Q8TEA8"/>
<dbReference type="SIGNOR" id="Q8TEA8"/>
<dbReference type="BioGRID-ORCS" id="92675">
    <property type="hits" value="20 hits in 1162 CRISPR screens"/>
</dbReference>
<dbReference type="ChiTaRS" id="DTD1">
    <property type="organism name" value="human"/>
</dbReference>
<dbReference type="EvolutionaryTrace" id="Q8TEA8"/>
<dbReference type="GenomeRNAi" id="92675"/>
<dbReference type="Pharos" id="Q8TEA8">
    <property type="development level" value="Tbio"/>
</dbReference>
<dbReference type="PRO" id="PR:Q8TEA8"/>
<dbReference type="Proteomes" id="UP000005640">
    <property type="component" value="Chromosome 20"/>
</dbReference>
<dbReference type="RNAct" id="Q8TEA8">
    <property type="molecule type" value="protein"/>
</dbReference>
<dbReference type="Bgee" id="ENSG00000125821">
    <property type="expression patterns" value="Expressed in gingival epithelium and 195 other cell types or tissues"/>
</dbReference>
<dbReference type="ExpressionAtlas" id="Q8TEA8">
    <property type="expression patterns" value="baseline and differential"/>
</dbReference>
<dbReference type="GO" id="GO:0005737">
    <property type="term" value="C:cytoplasm"/>
    <property type="evidence" value="ECO:0000318"/>
    <property type="project" value="GO_Central"/>
</dbReference>
<dbReference type="GO" id="GO:0005739">
    <property type="term" value="C:mitochondrion"/>
    <property type="evidence" value="ECO:0006056"/>
    <property type="project" value="FlyBase"/>
</dbReference>
<dbReference type="GO" id="GO:0005634">
    <property type="term" value="C:nucleus"/>
    <property type="evidence" value="ECO:0007669"/>
    <property type="project" value="UniProtKB-SubCell"/>
</dbReference>
<dbReference type="GO" id="GO:0051500">
    <property type="term" value="F:D-tyrosyl-tRNA(Tyr) deacylase activity"/>
    <property type="evidence" value="ECO:0000318"/>
    <property type="project" value="GO_Central"/>
</dbReference>
<dbReference type="GO" id="GO:0003677">
    <property type="term" value="F:DNA binding"/>
    <property type="evidence" value="ECO:0000269"/>
    <property type="project" value="DisProt"/>
</dbReference>
<dbReference type="GO" id="GO:0046872">
    <property type="term" value="F:metal ion binding"/>
    <property type="evidence" value="ECO:0007669"/>
    <property type="project" value="UniProtKB-KW"/>
</dbReference>
<dbReference type="GO" id="GO:0000049">
    <property type="term" value="F:tRNA binding"/>
    <property type="evidence" value="ECO:0007669"/>
    <property type="project" value="UniProtKB-KW"/>
</dbReference>
<dbReference type="GO" id="GO:0006260">
    <property type="term" value="P:DNA replication"/>
    <property type="evidence" value="ECO:0007669"/>
    <property type="project" value="UniProtKB-KW"/>
</dbReference>
<dbReference type="GO" id="GO:0006399">
    <property type="term" value="P:tRNA metabolic process"/>
    <property type="evidence" value="ECO:0000318"/>
    <property type="project" value="GO_Central"/>
</dbReference>
<dbReference type="CDD" id="cd00563">
    <property type="entry name" value="Dtyr_deacylase"/>
    <property type="match status" value="1"/>
</dbReference>
<dbReference type="DisProt" id="DP02452"/>
<dbReference type="FunFam" id="3.50.80.10:FF:000001">
    <property type="entry name" value="D-aminoacyl-tRNA deacylase"/>
    <property type="match status" value="1"/>
</dbReference>
<dbReference type="Gene3D" id="3.50.80.10">
    <property type="entry name" value="D-tyrosyl-tRNA(Tyr) deacylase"/>
    <property type="match status" value="1"/>
</dbReference>
<dbReference type="HAMAP" id="MF_00518">
    <property type="entry name" value="Deacylase_Dtd"/>
    <property type="match status" value="1"/>
</dbReference>
<dbReference type="InterPro" id="IPR003732">
    <property type="entry name" value="Daa-tRNA_deacyls_DTD"/>
</dbReference>
<dbReference type="InterPro" id="IPR023509">
    <property type="entry name" value="DTD-like_sf"/>
</dbReference>
<dbReference type="NCBIfam" id="TIGR00256">
    <property type="entry name" value="D-aminoacyl-tRNA deacylase"/>
    <property type="match status" value="1"/>
</dbReference>
<dbReference type="PANTHER" id="PTHR10472:SF5">
    <property type="entry name" value="D-AMINOACYL-TRNA DEACYLASE 1"/>
    <property type="match status" value="1"/>
</dbReference>
<dbReference type="PANTHER" id="PTHR10472">
    <property type="entry name" value="D-TYROSYL-TRNA TYR DEACYLASE"/>
    <property type="match status" value="1"/>
</dbReference>
<dbReference type="Pfam" id="PF02580">
    <property type="entry name" value="Tyr_Deacylase"/>
    <property type="match status" value="1"/>
</dbReference>
<dbReference type="SUPFAM" id="SSF69500">
    <property type="entry name" value="DTD-like"/>
    <property type="match status" value="1"/>
</dbReference>
<gene>
    <name type="primary">DTD1</name>
    <name type="synonym">C20orf88</name>
    <name type="synonym">DUEB</name>
    <name type="synonym">HARS2</name>
</gene>
<accession>Q8TEA8</accession>
<accession>A8K5X5</accession>
<accession>D3DW37</accession>
<accession>Q496D1</accession>
<accession>Q5W184</accession>
<accession>Q8WXU8</accession>
<accession>Q9BW67</accession>
<accession>Q9H464</accession>
<accession>Q9H474</accession>
<feature type="chain" id="PRO_0000164626" description="D-aminoacyl-tRNA deacylase 1">
    <location>
        <begin position="1"/>
        <end position="209"/>
    </location>
</feature>
<feature type="region of interest" description="Disordered" evidence="3">
    <location>
        <begin position="142"/>
        <end position="209"/>
    </location>
</feature>
<feature type="short sequence motif" description="Gly-cisPro motif, important for rejection of L-amino acids" evidence="1">
    <location>
        <begin position="139"/>
        <end position="140"/>
    </location>
</feature>
<feature type="compositionally biased region" description="Basic and acidic residues" evidence="3">
    <location>
        <begin position="159"/>
        <end position="170"/>
    </location>
</feature>
<feature type="compositionally biased region" description="Basic and acidic residues" evidence="3">
    <location>
        <begin position="181"/>
        <end position="194"/>
    </location>
</feature>
<feature type="binding site" evidence="6">
    <location>
        <position position="4"/>
    </location>
    <ligand>
        <name>Mg(2+)</name>
        <dbReference type="ChEBI" id="CHEBI:18420"/>
    </ligand>
</feature>
<feature type="binding site" evidence="6">
    <location>
        <position position="6"/>
    </location>
    <ligand>
        <name>Mg(2+)</name>
        <dbReference type="ChEBI" id="CHEBI:18420"/>
    </ligand>
</feature>
<feature type="binding site" evidence="6">
    <location>
        <position position="28"/>
    </location>
    <ligand>
        <name>Mg(2+)</name>
        <dbReference type="ChEBI" id="CHEBI:18420"/>
    </ligand>
</feature>
<feature type="modified residue" description="Phosphoserine" evidence="10 11 12 13">
    <location>
        <position position="197"/>
    </location>
</feature>
<feature type="modified residue" description="Phosphoserine" evidence="2">
    <location>
        <position position="204"/>
    </location>
</feature>
<feature type="modified residue" description="Phosphoserine" evidence="10 11">
    <location>
        <position position="205"/>
    </location>
</feature>
<feature type="sequence conflict" description="In Ref. 5; AAH45167." evidence="9" ref="5">
    <original>H</original>
    <variation>N</variation>
    <location>
        <position position="94"/>
    </location>
</feature>
<feature type="sequence conflict" description="In Ref. 1; AAL57046." evidence="9" ref="1">
    <original>H</original>
    <variation>R</variation>
    <location>
        <position position="134"/>
    </location>
</feature>
<feature type="strand" evidence="14">
    <location>
        <begin position="2"/>
        <end position="15"/>
    </location>
</feature>
<feature type="strand" evidence="14">
    <location>
        <begin position="18"/>
        <end position="32"/>
    </location>
</feature>
<feature type="helix" evidence="14">
    <location>
        <begin position="39"/>
        <end position="51"/>
    </location>
</feature>
<feature type="helix" evidence="14">
    <location>
        <begin position="67"/>
        <end position="70"/>
    </location>
</feature>
<feature type="strand" evidence="14">
    <location>
        <begin position="73"/>
        <end position="78"/>
    </location>
</feature>
<feature type="helix" evidence="14">
    <location>
        <begin position="80"/>
        <end position="82"/>
    </location>
</feature>
<feature type="strand" evidence="14">
    <location>
        <begin position="87"/>
        <end position="90"/>
    </location>
</feature>
<feature type="helix" evidence="14">
    <location>
        <begin position="99"/>
        <end position="116"/>
    </location>
</feature>
<feature type="helix" evidence="14">
    <location>
        <begin position="119"/>
        <end position="121"/>
    </location>
</feature>
<feature type="strand" evidence="14">
    <location>
        <begin position="122"/>
        <end position="124"/>
    </location>
</feature>
<feature type="strand" evidence="14">
    <location>
        <begin position="131"/>
        <end position="146"/>
    </location>
</feature>
<evidence type="ECO:0000250" key="1">
    <source>
        <dbReference type="UniProtKB" id="Q8IIS0"/>
    </source>
</evidence>
<evidence type="ECO:0000250" key="2">
    <source>
        <dbReference type="UniProtKB" id="Q9DD18"/>
    </source>
</evidence>
<evidence type="ECO:0000256" key="3">
    <source>
        <dbReference type="SAM" id="MobiDB-lite"/>
    </source>
</evidence>
<evidence type="ECO:0000269" key="4">
    <source>
    </source>
</evidence>
<evidence type="ECO:0000269" key="5">
    <source>
    </source>
</evidence>
<evidence type="ECO:0000269" key="6">
    <source>
    </source>
</evidence>
<evidence type="ECO:0000269" key="7">
    <source>
    </source>
</evidence>
<evidence type="ECO:0000303" key="8">
    <source>
    </source>
</evidence>
<evidence type="ECO:0000305" key="9"/>
<evidence type="ECO:0007744" key="10">
    <source>
    </source>
</evidence>
<evidence type="ECO:0007744" key="11">
    <source>
    </source>
</evidence>
<evidence type="ECO:0007744" key="12">
    <source>
    </source>
</evidence>
<evidence type="ECO:0007744" key="13">
    <source>
    </source>
</evidence>
<evidence type="ECO:0007829" key="14">
    <source>
        <dbReference type="PDB" id="2OKV"/>
    </source>
</evidence>
<comment type="function">
    <text evidence="5 7">Possible ATPase (PubMed:15653697) involved in DNA replication, may facilitate loading of CDC45 onto pre-replication complexes (PubMed:20065034).</text>
</comment>
<comment type="function">
    <text evidence="1">An aminoacyl-tRNA editing enzyme that deacylates mischarged D-aminoacyl-tRNAs. Also deacylates mischarged glycyl-tRNA(Ala), protecting cells against glycine mischarging by AlaRS. Acts via tRNA-based rather than protein-based catalysis; rejects L-amino acids rather than detecting D-amino acids in the active site. By recycling D-aminoacyl-tRNA to D-amino acids and free tRNA molecules, this enzyme counteracts the toxicity associated with the formation of D-aminoacyl-tRNA entities in vivo and helps enforce protein L-homochirality.</text>
</comment>
<comment type="catalytic activity">
    <reaction evidence="1">
        <text>glycyl-tRNA(Ala) + H2O = tRNA(Ala) + glycine + H(+)</text>
        <dbReference type="Rhea" id="RHEA:53744"/>
        <dbReference type="Rhea" id="RHEA-COMP:9657"/>
        <dbReference type="Rhea" id="RHEA-COMP:13640"/>
        <dbReference type="ChEBI" id="CHEBI:15377"/>
        <dbReference type="ChEBI" id="CHEBI:15378"/>
        <dbReference type="ChEBI" id="CHEBI:57305"/>
        <dbReference type="ChEBI" id="CHEBI:78442"/>
        <dbReference type="ChEBI" id="CHEBI:78522"/>
        <dbReference type="EC" id="3.1.1.96"/>
    </reaction>
</comment>
<comment type="catalytic activity">
    <reaction evidence="1">
        <text>a D-aminoacyl-tRNA + H2O = a tRNA + a D-alpha-amino acid + H(+)</text>
        <dbReference type="Rhea" id="RHEA:13953"/>
        <dbReference type="Rhea" id="RHEA-COMP:10123"/>
        <dbReference type="Rhea" id="RHEA-COMP:10124"/>
        <dbReference type="ChEBI" id="CHEBI:15377"/>
        <dbReference type="ChEBI" id="CHEBI:15378"/>
        <dbReference type="ChEBI" id="CHEBI:59871"/>
        <dbReference type="ChEBI" id="CHEBI:78442"/>
        <dbReference type="ChEBI" id="CHEBI:79333"/>
        <dbReference type="EC" id="3.1.1.96"/>
    </reaction>
</comment>
<comment type="subunit">
    <text evidence="5 6 7">Homodimer (PubMed:15653697). Interacts with CDC45 and TOPBP1 (PubMed:20065034).</text>
</comment>
<comment type="subcellular location">
    <subcellularLocation>
        <location evidence="5 7">Nucleus</location>
    </subcellularLocation>
    <subcellularLocation>
        <location evidence="1">Cytoplasm</location>
    </subcellularLocation>
    <text>Associated with chromatin at some replication origins containing functional DNA-unwinding elements (PubMed:20065034).</text>
</comment>
<comment type="tissue specificity">
    <text evidence="4">Expressed in many adult and fetal tissues. Highest levels in testis, ovary, spleen and in adult and fetal brain.</text>
</comment>
<comment type="domain">
    <text evidence="1">A Gly-cisPro motif from one monomer fits into the active site of the other monomer to allow specific chiral rejection of L-amino acids.</text>
</comment>
<comment type="PTM">
    <text evidence="5 7">Preferentially phosphorylated in cells arrested early in S phase (PubMed:15653697). Phosphorylation in the C-terminus weakens the interaction with CDC45 (PubMed:20065034).</text>
</comment>
<comment type="similarity">
    <text evidence="9">Belongs to the DTD family.</text>
</comment>
<comment type="sequence caution" evidence="9">
    <conflict type="miscellaneous discrepancy">
        <sequence resource="EMBL-CDS" id="BAB85044"/>
    </conflict>
    <text>Presence of Alu-repeat DNA.</text>
</comment>
<sequence length="209" mass="23424">MKAVVQRVTRASVTVGGEQISAIGRGICVLLGISLEDTQKELEHMVRKILNLRVFEDESGKHWSKSVMDKQYEILCVSQFTLQCVLKGNKPDFHLAMPTEQAEGFYNSFLEQLRKTYRPELIKDGKFGAYMQVHIQNDGPVTIELESPAPGTATSDPKQLSKLEKQQQRKEKTRAKGPSESSKERNTPRKEDRSASSGAEGDVSSEREP</sequence>
<reference key="1">
    <citation type="journal article" date="2002" name="Biochem. Genet.">
        <title>Cloning and identification of a novel cDNA which may be associated with FKBP25.</title>
        <authorList>
            <person name="Meng X.X."/>
            <person name="Chen J.J."/>
            <person name="Yang Q.Q."/>
            <person name="Wang S."/>
            <person name="Chao Y."/>
            <person name="Ying K."/>
            <person name="Xie Y."/>
            <person name="Mao Y."/>
        </authorList>
    </citation>
    <scope>NUCLEOTIDE SEQUENCE [MRNA]</scope>
    <scope>TISSUE SPECIFICITY</scope>
    <source>
        <tissue>Fetal brain</tissue>
    </source>
</reference>
<reference key="2">
    <citation type="journal article" date="2004" name="Nat. Genet.">
        <title>Complete sequencing and characterization of 21,243 full-length human cDNAs.</title>
        <authorList>
            <person name="Ota T."/>
            <person name="Suzuki Y."/>
            <person name="Nishikawa T."/>
            <person name="Otsuki T."/>
            <person name="Sugiyama T."/>
            <person name="Irie R."/>
            <person name="Wakamatsu A."/>
            <person name="Hayashi K."/>
            <person name="Sato H."/>
            <person name="Nagai K."/>
            <person name="Kimura K."/>
            <person name="Makita H."/>
            <person name="Sekine M."/>
            <person name="Obayashi M."/>
            <person name="Nishi T."/>
            <person name="Shibahara T."/>
            <person name="Tanaka T."/>
            <person name="Ishii S."/>
            <person name="Yamamoto J."/>
            <person name="Saito K."/>
            <person name="Kawai Y."/>
            <person name="Isono Y."/>
            <person name="Nakamura Y."/>
            <person name="Nagahari K."/>
            <person name="Murakami K."/>
            <person name="Yasuda T."/>
            <person name="Iwayanagi T."/>
            <person name="Wagatsuma M."/>
            <person name="Shiratori A."/>
            <person name="Sudo H."/>
            <person name="Hosoiri T."/>
            <person name="Kaku Y."/>
            <person name="Kodaira H."/>
            <person name="Kondo H."/>
            <person name="Sugawara M."/>
            <person name="Takahashi M."/>
            <person name="Kanda K."/>
            <person name="Yokoi T."/>
            <person name="Furuya T."/>
            <person name="Kikkawa E."/>
            <person name="Omura Y."/>
            <person name="Abe K."/>
            <person name="Kamihara K."/>
            <person name="Katsuta N."/>
            <person name="Sato K."/>
            <person name="Tanikawa M."/>
            <person name="Yamazaki M."/>
            <person name="Ninomiya K."/>
            <person name="Ishibashi T."/>
            <person name="Yamashita H."/>
            <person name="Murakawa K."/>
            <person name="Fujimori K."/>
            <person name="Tanai H."/>
            <person name="Kimata M."/>
            <person name="Watanabe M."/>
            <person name="Hiraoka S."/>
            <person name="Chiba Y."/>
            <person name="Ishida S."/>
            <person name="Ono Y."/>
            <person name="Takiguchi S."/>
            <person name="Watanabe S."/>
            <person name="Yosida M."/>
            <person name="Hotuta T."/>
            <person name="Kusano J."/>
            <person name="Kanehori K."/>
            <person name="Takahashi-Fujii A."/>
            <person name="Hara H."/>
            <person name="Tanase T.-O."/>
            <person name="Nomura Y."/>
            <person name="Togiya S."/>
            <person name="Komai F."/>
            <person name="Hara R."/>
            <person name="Takeuchi K."/>
            <person name="Arita M."/>
            <person name="Imose N."/>
            <person name="Musashino K."/>
            <person name="Yuuki H."/>
            <person name="Oshima A."/>
            <person name="Sasaki N."/>
            <person name="Aotsuka S."/>
            <person name="Yoshikawa Y."/>
            <person name="Matsunawa H."/>
            <person name="Ichihara T."/>
            <person name="Shiohata N."/>
            <person name="Sano S."/>
            <person name="Moriya S."/>
            <person name="Momiyama H."/>
            <person name="Satoh N."/>
            <person name="Takami S."/>
            <person name="Terashima Y."/>
            <person name="Suzuki O."/>
            <person name="Nakagawa S."/>
            <person name="Senoh A."/>
            <person name="Mizoguchi H."/>
            <person name="Goto Y."/>
            <person name="Shimizu F."/>
            <person name="Wakebe H."/>
            <person name="Hishigaki H."/>
            <person name="Watanabe T."/>
            <person name="Sugiyama A."/>
            <person name="Takemoto M."/>
            <person name="Kawakami B."/>
            <person name="Yamazaki M."/>
            <person name="Watanabe K."/>
            <person name="Kumagai A."/>
            <person name="Itakura S."/>
            <person name="Fukuzumi Y."/>
            <person name="Fujimori Y."/>
            <person name="Komiyama M."/>
            <person name="Tashiro H."/>
            <person name="Tanigami A."/>
            <person name="Fujiwara T."/>
            <person name="Ono T."/>
            <person name="Yamada K."/>
            <person name="Fujii Y."/>
            <person name="Ozaki K."/>
            <person name="Hirao M."/>
            <person name="Ohmori Y."/>
            <person name="Kawabata A."/>
            <person name="Hikiji T."/>
            <person name="Kobatake N."/>
            <person name="Inagaki H."/>
            <person name="Ikema Y."/>
            <person name="Okamoto S."/>
            <person name="Okitani R."/>
            <person name="Kawakami T."/>
            <person name="Noguchi S."/>
            <person name="Itoh T."/>
            <person name="Shigeta K."/>
            <person name="Senba T."/>
            <person name="Matsumura K."/>
            <person name="Nakajima Y."/>
            <person name="Mizuno T."/>
            <person name="Morinaga M."/>
            <person name="Sasaki M."/>
            <person name="Togashi T."/>
            <person name="Oyama M."/>
            <person name="Hata H."/>
            <person name="Watanabe M."/>
            <person name="Komatsu T."/>
            <person name="Mizushima-Sugano J."/>
            <person name="Satoh T."/>
            <person name="Shirai Y."/>
            <person name="Takahashi Y."/>
            <person name="Nakagawa K."/>
            <person name="Okumura K."/>
            <person name="Nagase T."/>
            <person name="Nomura N."/>
            <person name="Kikuchi H."/>
            <person name="Masuho Y."/>
            <person name="Yamashita R."/>
            <person name="Nakai K."/>
            <person name="Yada T."/>
            <person name="Nakamura Y."/>
            <person name="Ohara O."/>
            <person name="Isogai T."/>
            <person name="Sugano S."/>
        </authorList>
    </citation>
    <scope>NUCLEOTIDE SEQUENCE [LARGE SCALE MRNA]</scope>
    <source>
        <tissue>Brain</tissue>
        <tissue>Hepatoma</tissue>
    </source>
</reference>
<reference key="3">
    <citation type="journal article" date="2001" name="Nature">
        <title>The DNA sequence and comparative analysis of human chromosome 20.</title>
        <authorList>
            <person name="Deloukas P."/>
            <person name="Matthews L.H."/>
            <person name="Ashurst J.L."/>
            <person name="Burton J."/>
            <person name="Gilbert J.G.R."/>
            <person name="Jones M."/>
            <person name="Stavrides G."/>
            <person name="Almeida J.P."/>
            <person name="Babbage A.K."/>
            <person name="Bagguley C.L."/>
            <person name="Bailey J."/>
            <person name="Barlow K.F."/>
            <person name="Bates K.N."/>
            <person name="Beard L.M."/>
            <person name="Beare D.M."/>
            <person name="Beasley O.P."/>
            <person name="Bird C.P."/>
            <person name="Blakey S.E."/>
            <person name="Bridgeman A.M."/>
            <person name="Brown A.J."/>
            <person name="Buck D."/>
            <person name="Burrill W.D."/>
            <person name="Butler A.P."/>
            <person name="Carder C."/>
            <person name="Carter N.P."/>
            <person name="Chapman J.C."/>
            <person name="Clamp M."/>
            <person name="Clark G."/>
            <person name="Clark L.N."/>
            <person name="Clark S.Y."/>
            <person name="Clee C.M."/>
            <person name="Clegg S."/>
            <person name="Cobley V.E."/>
            <person name="Collier R.E."/>
            <person name="Connor R.E."/>
            <person name="Corby N.R."/>
            <person name="Coulson A."/>
            <person name="Coville G.J."/>
            <person name="Deadman R."/>
            <person name="Dhami P.D."/>
            <person name="Dunn M."/>
            <person name="Ellington A.G."/>
            <person name="Frankland J.A."/>
            <person name="Fraser A."/>
            <person name="French L."/>
            <person name="Garner P."/>
            <person name="Grafham D.V."/>
            <person name="Griffiths C."/>
            <person name="Griffiths M.N.D."/>
            <person name="Gwilliam R."/>
            <person name="Hall R.E."/>
            <person name="Hammond S."/>
            <person name="Harley J.L."/>
            <person name="Heath P.D."/>
            <person name="Ho S."/>
            <person name="Holden J.L."/>
            <person name="Howden P.J."/>
            <person name="Huckle E."/>
            <person name="Hunt A.R."/>
            <person name="Hunt S.E."/>
            <person name="Jekosch K."/>
            <person name="Johnson C.M."/>
            <person name="Johnson D."/>
            <person name="Kay M.P."/>
            <person name="Kimberley A.M."/>
            <person name="King A."/>
            <person name="Knights A."/>
            <person name="Laird G.K."/>
            <person name="Lawlor S."/>
            <person name="Lehvaeslaiho M.H."/>
            <person name="Leversha M.A."/>
            <person name="Lloyd C."/>
            <person name="Lloyd D.M."/>
            <person name="Lovell J.D."/>
            <person name="Marsh V.L."/>
            <person name="Martin S.L."/>
            <person name="McConnachie L.J."/>
            <person name="McLay K."/>
            <person name="McMurray A.A."/>
            <person name="Milne S.A."/>
            <person name="Mistry D."/>
            <person name="Moore M.J.F."/>
            <person name="Mullikin J.C."/>
            <person name="Nickerson T."/>
            <person name="Oliver K."/>
            <person name="Parker A."/>
            <person name="Patel R."/>
            <person name="Pearce T.A.V."/>
            <person name="Peck A.I."/>
            <person name="Phillimore B.J.C.T."/>
            <person name="Prathalingam S.R."/>
            <person name="Plumb R.W."/>
            <person name="Ramsay H."/>
            <person name="Rice C.M."/>
            <person name="Ross M.T."/>
            <person name="Scott C.E."/>
            <person name="Sehra H.K."/>
            <person name="Shownkeen R."/>
            <person name="Sims S."/>
            <person name="Skuce C.D."/>
            <person name="Smith M.L."/>
            <person name="Soderlund C."/>
            <person name="Steward C.A."/>
            <person name="Sulston J.E."/>
            <person name="Swann R.M."/>
            <person name="Sycamore N."/>
            <person name="Taylor R."/>
            <person name="Tee L."/>
            <person name="Thomas D.W."/>
            <person name="Thorpe A."/>
            <person name="Tracey A."/>
            <person name="Tromans A.C."/>
            <person name="Vaudin M."/>
            <person name="Wall M."/>
            <person name="Wallis J.M."/>
            <person name="Whitehead S.L."/>
            <person name="Whittaker P."/>
            <person name="Willey D.L."/>
            <person name="Williams L."/>
            <person name="Williams S.A."/>
            <person name="Wilming L."/>
            <person name="Wray P.W."/>
            <person name="Hubbard T."/>
            <person name="Durbin R.M."/>
            <person name="Bentley D.R."/>
            <person name="Beck S."/>
            <person name="Rogers J."/>
        </authorList>
    </citation>
    <scope>NUCLEOTIDE SEQUENCE [LARGE SCALE GENOMIC DNA]</scope>
</reference>
<reference key="4">
    <citation type="submission" date="2005-09" db="EMBL/GenBank/DDBJ databases">
        <authorList>
            <person name="Mural R.J."/>
            <person name="Istrail S."/>
            <person name="Sutton G.G."/>
            <person name="Florea L."/>
            <person name="Halpern A.L."/>
            <person name="Mobarry C.M."/>
            <person name="Lippert R."/>
            <person name="Walenz B."/>
            <person name="Shatkay H."/>
            <person name="Dew I."/>
            <person name="Miller J.R."/>
            <person name="Flanigan M.J."/>
            <person name="Edwards N.J."/>
            <person name="Bolanos R."/>
            <person name="Fasulo D."/>
            <person name="Halldorsson B.V."/>
            <person name="Hannenhalli S."/>
            <person name="Turner R."/>
            <person name="Yooseph S."/>
            <person name="Lu F."/>
            <person name="Nusskern D.R."/>
            <person name="Shue B.C."/>
            <person name="Zheng X.H."/>
            <person name="Zhong F."/>
            <person name="Delcher A.L."/>
            <person name="Huson D.H."/>
            <person name="Kravitz S.A."/>
            <person name="Mouchard L."/>
            <person name="Reinert K."/>
            <person name="Remington K.A."/>
            <person name="Clark A.G."/>
            <person name="Waterman M.S."/>
            <person name="Eichler E.E."/>
            <person name="Adams M.D."/>
            <person name="Hunkapiller M.W."/>
            <person name="Myers E.W."/>
            <person name="Venter J.C."/>
        </authorList>
    </citation>
    <scope>NUCLEOTIDE SEQUENCE [LARGE SCALE GENOMIC DNA]</scope>
</reference>
<reference key="5">
    <citation type="journal article" date="2004" name="Genome Res.">
        <title>The status, quality, and expansion of the NIH full-length cDNA project: the Mammalian Gene Collection (MGC).</title>
        <authorList>
            <consortium name="The MGC Project Team"/>
        </authorList>
    </citation>
    <scope>NUCLEOTIDE SEQUENCE [LARGE SCALE MRNA]</scope>
    <source>
        <tissue>Brain</tissue>
        <tissue>Skin</tissue>
    </source>
</reference>
<reference key="6">
    <citation type="journal article" date="2005" name="J. Biol. Chem.">
        <title>The c-myc DNA-unwinding element-binding protein modulates the assembly of DNA replication complexes in vitro.</title>
        <authorList>
            <person name="Casper J.M."/>
            <person name="Kemp M.G."/>
            <person name="Ghosh M."/>
            <person name="Randall G.M."/>
            <person name="Vaillant A."/>
            <person name="Leffak M."/>
        </authorList>
    </citation>
    <scope>FUNCTION</scope>
    <scope>PHOSPHORYLATION</scope>
    <scope>SUBUNIT</scope>
    <scope>SUBCELLULAR LOCATION</scope>
</reference>
<reference key="7">
    <citation type="journal article" date="2008" name="J. Proteome Res.">
        <title>Phosphoproteome of resting human platelets.</title>
        <authorList>
            <person name="Zahedi R.P."/>
            <person name="Lewandrowski U."/>
            <person name="Wiesner J."/>
            <person name="Wortelkamp S."/>
            <person name="Moebius J."/>
            <person name="Schuetz C."/>
            <person name="Walter U."/>
            <person name="Gambaryan S."/>
            <person name="Sickmann A."/>
        </authorList>
    </citation>
    <scope>IDENTIFICATION BY MASS SPECTROMETRY [LARGE SCALE ANALYSIS]</scope>
    <source>
        <tissue>Platelet</tissue>
    </source>
</reference>
<reference key="8">
    <citation type="journal article" date="2008" name="Proc. Natl. Acad. Sci. U.S.A.">
        <title>A quantitative atlas of mitotic phosphorylation.</title>
        <authorList>
            <person name="Dephoure N."/>
            <person name="Zhou C."/>
            <person name="Villen J."/>
            <person name="Beausoleil S.A."/>
            <person name="Bakalarski C.E."/>
            <person name="Elledge S.J."/>
            <person name="Gygi S.P."/>
        </authorList>
    </citation>
    <scope>PHOSPHORYLATION [LARGE SCALE ANALYSIS] AT SER-197 AND SER-205</scope>
    <scope>IDENTIFICATION BY MASS SPECTROMETRY [LARGE SCALE ANALYSIS]</scope>
    <source>
        <tissue>Cervix carcinoma</tissue>
    </source>
</reference>
<reference key="9">
    <citation type="journal article" date="2009" name="Anal. Chem.">
        <title>Lys-N and trypsin cover complementary parts of the phosphoproteome in a refined SCX-based approach.</title>
        <authorList>
            <person name="Gauci S."/>
            <person name="Helbig A.O."/>
            <person name="Slijper M."/>
            <person name="Krijgsveld J."/>
            <person name="Heck A.J."/>
            <person name="Mohammed S."/>
        </authorList>
    </citation>
    <scope>IDENTIFICATION BY MASS SPECTROMETRY [LARGE SCALE ANALYSIS]</scope>
</reference>
<reference key="10">
    <citation type="journal article" date="2009" name="Sci. Signal.">
        <title>Quantitative phosphoproteomic analysis of T cell receptor signaling reveals system-wide modulation of protein-protein interactions.</title>
        <authorList>
            <person name="Mayya V."/>
            <person name="Lundgren D.H."/>
            <person name="Hwang S.-I."/>
            <person name="Rezaul K."/>
            <person name="Wu L."/>
            <person name="Eng J.K."/>
            <person name="Rodionov V."/>
            <person name="Han D.K."/>
        </authorList>
    </citation>
    <scope>PHOSPHORYLATION [LARGE SCALE ANALYSIS] AT SER-197 AND SER-205</scope>
    <scope>IDENTIFICATION BY MASS SPECTROMETRY [LARGE SCALE ANALYSIS]</scope>
    <source>
        <tissue>Leukemic T-cell</tissue>
    </source>
</reference>
<reference key="11">
    <citation type="journal article" date="2010" name="Mol. Cell. Biol.">
        <title>The DNA unwinding element binding protein DUE-B interacts with Cdc45 in preinitiation complex formation.</title>
        <authorList>
            <person name="Chowdhury A."/>
            <person name="Liu G."/>
            <person name="Kemp M."/>
            <person name="Chen X."/>
            <person name="Katrangi N."/>
            <person name="Myers S."/>
            <person name="Ghosh M."/>
            <person name="Yao J."/>
            <person name="Gao Y."/>
            <person name="Bubulya P."/>
            <person name="Leffak M."/>
        </authorList>
    </citation>
    <scope>FUNCTION</scope>
    <scope>SUBCELLULAR LOCATION</scope>
    <scope>PHOSPHORYLATION</scope>
    <scope>INTERACTION WITH CDC45 AND TOPBP1</scope>
</reference>
<reference key="12">
    <citation type="journal article" date="2010" name="Sci. Signal.">
        <title>Quantitative phosphoproteomics reveals widespread full phosphorylation site occupancy during mitosis.</title>
        <authorList>
            <person name="Olsen J.V."/>
            <person name="Vermeulen M."/>
            <person name="Santamaria A."/>
            <person name="Kumar C."/>
            <person name="Miller M.L."/>
            <person name="Jensen L.J."/>
            <person name="Gnad F."/>
            <person name="Cox J."/>
            <person name="Jensen T.S."/>
            <person name="Nigg E.A."/>
            <person name="Brunak S."/>
            <person name="Mann M."/>
        </authorList>
    </citation>
    <scope>IDENTIFICATION BY MASS SPECTROMETRY [LARGE SCALE ANALYSIS]</scope>
    <source>
        <tissue>Cervix carcinoma</tissue>
    </source>
</reference>
<reference key="13">
    <citation type="journal article" date="2011" name="BMC Syst. Biol.">
        <title>Initial characterization of the human central proteome.</title>
        <authorList>
            <person name="Burkard T.R."/>
            <person name="Planyavsky M."/>
            <person name="Kaupe I."/>
            <person name="Breitwieser F.P."/>
            <person name="Buerckstuemmer T."/>
            <person name="Bennett K.L."/>
            <person name="Superti-Furga G."/>
            <person name="Colinge J."/>
        </authorList>
    </citation>
    <scope>IDENTIFICATION BY MASS SPECTROMETRY [LARGE SCALE ANALYSIS]</scope>
</reference>
<reference key="14">
    <citation type="journal article" date="2011" name="Sci. Signal.">
        <title>System-wide temporal characterization of the proteome and phosphoproteome of human embryonic stem cell differentiation.</title>
        <authorList>
            <person name="Rigbolt K.T."/>
            <person name="Prokhorova T.A."/>
            <person name="Akimov V."/>
            <person name="Henningsen J."/>
            <person name="Johansen P.T."/>
            <person name="Kratchmarova I."/>
            <person name="Kassem M."/>
            <person name="Mann M."/>
            <person name="Olsen J.V."/>
            <person name="Blagoev B."/>
        </authorList>
    </citation>
    <scope>PHOSPHORYLATION [LARGE SCALE ANALYSIS] AT SER-197</scope>
    <scope>IDENTIFICATION BY MASS SPECTROMETRY [LARGE SCALE ANALYSIS]</scope>
</reference>
<reference key="15">
    <citation type="journal article" date="2012" name="Proc. Natl. Acad. Sci. U.S.A.">
        <title>N-terminal acetylome analyses and functional insights of the N-terminal acetyltransferase NatB.</title>
        <authorList>
            <person name="Van Damme P."/>
            <person name="Lasa M."/>
            <person name="Polevoda B."/>
            <person name="Gazquez C."/>
            <person name="Elosegui-Artola A."/>
            <person name="Kim D.S."/>
            <person name="De Juan-Pardo E."/>
            <person name="Demeyer K."/>
            <person name="Hole K."/>
            <person name="Larrea E."/>
            <person name="Timmerman E."/>
            <person name="Prieto J."/>
            <person name="Arnesen T."/>
            <person name="Sherman F."/>
            <person name="Gevaert K."/>
            <person name="Aldabe R."/>
        </authorList>
    </citation>
    <scope>IDENTIFICATION BY MASS SPECTROMETRY [LARGE SCALE ANALYSIS]</scope>
</reference>
<reference key="16">
    <citation type="journal article" date="2013" name="J. Proteome Res.">
        <title>Toward a comprehensive characterization of a human cancer cell phosphoproteome.</title>
        <authorList>
            <person name="Zhou H."/>
            <person name="Di Palma S."/>
            <person name="Preisinger C."/>
            <person name="Peng M."/>
            <person name="Polat A.N."/>
            <person name="Heck A.J."/>
            <person name="Mohammed S."/>
        </authorList>
    </citation>
    <scope>PHOSPHORYLATION [LARGE SCALE ANALYSIS] AT SER-197</scope>
    <scope>IDENTIFICATION BY MASS SPECTROMETRY [LARGE SCALE ANALYSIS]</scope>
    <source>
        <tissue>Cervix carcinoma</tissue>
        <tissue>Erythroleukemia</tissue>
    </source>
</reference>
<reference key="17">
    <citation type="journal article" date="2014" name="J. Proteomics">
        <title>An enzyme assisted RP-RPLC approach for in-depth analysis of human liver phosphoproteome.</title>
        <authorList>
            <person name="Bian Y."/>
            <person name="Song C."/>
            <person name="Cheng K."/>
            <person name="Dong M."/>
            <person name="Wang F."/>
            <person name="Huang J."/>
            <person name="Sun D."/>
            <person name="Wang L."/>
            <person name="Ye M."/>
            <person name="Zou H."/>
        </authorList>
    </citation>
    <scope>IDENTIFICATION BY MASS SPECTROMETRY [LARGE SCALE ANALYSIS]</scope>
    <source>
        <tissue>Liver</tissue>
    </source>
</reference>
<reference key="18">
    <citation type="journal article" date="2007" name="J. Biol. Chem.">
        <title>Structure and function of the c-myc DNA-unwinding element-binding protein DUE-B.</title>
        <authorList>
            <person name="Kemp M."/>
            <person name="Bae B."/>
            <person name="Yu J.P."/>
            <person name="Ghosh M."/>
            <person name="Leffak M."/>
            <person name="Nair S.K."/>
        </authorList>
    </citation>
    <scope>X-RAY CRYSTALLOGRAPHY (2.0 ANGSTROMS)</scope>
    <scope>SUBUNIT</scope>
    <scope>MAGNESIUM-BINDING SITES</scope>
</reference>
<proteinExistence type="evidence at protein level"/>
<keyword id="KW-0002">3D-structure</keyword>
<keyword id="KW-0963">Cytoplasm</keyword>
<keyword id="KW-0235">DNA replication</keyword>
<keyword id="KW-0238">DNA-binding</keyword>
<keyword id="KW-0378">Hydrolase</keyword>
<keyword id="KW-0460">Magnesium</keyword>
<keyword id="KW-0479">Metal-binding</keyword>
<keyword id="KW-0539">Nucleus</keyword>
<keyword id="KW-0597">Phosphoprotein</keyword>
<keyword id="KW-1267">Proteomics identification</keyword>
<keyword id="KW-1185">Reference proteome</keyword>
<keyword id="KW-0694">RNA-binding</keyword>
<keyword id="KW-0820">tRNA-binding</keyword>